<dbReference type="EMBL" id="DQ897681">
    <property type="protein sequence ID" value="ABI17317.1"/>
    <property type="molecule type" value="Genomic_DNA"/>
</dbReference>
<dbReference type="RefSeq" id="YP_784126.1">
    <property type="nucleotide sequence ID" value="NC_008454.1"/>
</dbReference>
<dbReference type="SMR" id="Q06FQ5"/>
<dbReference type="GeneID" id="4362879"/>
<dbReference type="GO" id="GO:0009535">
    <property type="term" value="C:chloroplast thylakoid membrane"/>
    <property type="evidence" value="ECO:0007669"/>
    <property type="project" value="UniProtKB-SubCell"/>
</dbReference>
<dbReference type="GO" id="GO:0005886">
    <property type="term" value="C:plasma membrane"/>
    <property type="evidence" value="ECO:0007669"/>
    <property type="project" value="TreeGrafter"/>
</dbReference>
<dbReference type="GO" id="GO:0020037">
    <property type="term" value="F:heme binding"/>
    <property type="evidence" value="ECO:0007669"/>
    <property type="project" value="InterPro"/>
</dbReference>
<dbReference type="GO" id="GO:0017004">
    <property type="term" value="P:cytochrome complex assembly"/>
    <property type="evidence" value="ECO:0007669"/>
    <property type="project" value="UniProtKB-UniRule"/>
</dbReference>
<dbReference type="HAMAP" id="MF_01391">
    <property type="entry name" value="CytC_CcsA"/>
    <property type="match status" value="1"/>
</dbReference>
<dbReference type="InterPro" id="IPR002541">
    <property type="entry name" value="Cyt_c_assembly"/>
</dbReference>
<dbReference type="InterPro" id="IPR017562">
    <property type="entry name" value="Cyt_c_biogenesis_CcsA"/>
</dbReference>
<dbReference type="InterPro" id="IPR045062">
    <property type="entry name" value="Cyt_c_biogenesis_CcsA/CcmC"/>
</dbReference>
<dbReference type="NCBIfam" id="TIGR03144">
    <property type="entry name" value="cytochr_II_ccsB"/>
    <property type="match status" value="1"/>
</dbReference>
<dbReference type="PANTHER" id="PTHR30071:SF1">
    <property type="entry name" value="CYTOCHROME B_B6 PROTEIN-RELATED"/>
    <property type="match status" value="1"/>
</dbReference>
<dbReference type="PANTHER" id="PTHR30071">
    <property type="entry name" value="HEME EXPORTER PROTEIN C"/>
    <property type="match status" value="1"/>
</dbReference>
<dbReference type="Pfam" id="PF01578">
    <property type="entry name" value="Cytochrom_C_asm"/>
    <property type="match status" value="1"/>
</dbReference>
<proteinExistence type="inferred from homology"/>
<keyword id="KW-0150">Chloroplast</keyword>
<keyword id="KW-0201">Cytochrome c-type biogenesis</keyword>
<keyword id="KW-0472">Membrane</keyword>
<keyword id="KW-0934">Plastid</keyword>
<keyword id="KW-0793">Thylakoid</keyword>
<keyword id="KW-0812">Transmembrane</keyword>
<keyword id="KW-1133">Transmembrane helix</keyword>
<protein>
    <recommendedName>
        <fullName evidence="1">Cytochrome c biogenesis protein CcsA</fullName>
    </recommendedName>
</protein>
<organism>
    <name type="scientific">Pelargonium hortorum</name>
    <name type="common">Common geranium</name>
    <name type="synonym">Pelargonium inquinans x Pelargonium zonale</name>
    <dbReference type="NCBI Taxonomy" id="4031"/>
    <lineage>
        <taxon>Eukaryota</taxon>
        <taxon>Viridiplantae</taxon>
        <taxon>Streptophyta</taxon>
        <taxon>Embryophyta</taxon>
        <taxon>Tracheophyta</taxon>
        <taxon>Spermatophyta</taxon>
        <taxon>Magnoliopsida</taxon>
        <taxon>eudicotyledons</taxon>
        <taxon>Gunneridae</taxon>
        <taxon>Pentapetalae</taxon>
        <taxon>rosids</taxon>
        <taxon>malvids</taxon>
        <taxon>Geraniales</taxon>
        <taxon>Geraniaceae</taxon>
        <taxon>Pelargonium</taxon>
    </lineage>
</organism>
<accession>Q06FQ5</accession>
<evidence type="ECO:0000255" key="1">
    <source>
        <dbReference type="HAMAP-Rule" id="MF_01391"/>
    </source>
</evidence>
<comment type="function">
    <text evidence="1">Required during biogenesis of c-type cytochromes (cytochrome c6 and cytochrome f) at the step of heme attachment.</text>
</comment>
<comment type="subunit">
    <text evidence="1">May interact with Ccs1.</text>
</comment>
<comment type="subcellular location">
    <subcellularLocation>
        <location evidence="1">Plastid</location>
        <location evidence="1">Chloroplast thylakoid membrane</location>
        <topology evidence="1">Multi-pass membrane protein</topology>
    </subcellularLocation>
</comment>
<comment type="similarity">
    <text evidence="1">Belongs to the CcmF/CycK/Ccl1/NrfE/CcsA family.</text>
</comment>
<feature type="chain" id="PRO_0000353782" description="Cytochrome c biogenesis protein CcsA">
    <location>
        <begin position="1"/>
        <end position="317"/>
    </location>
</feature>
<feature type="transmembrane region" description="Helical" evidence="1">
    <location>
        <begin position="17"/>
        <end position="37"/>
    </location>
</feature>
<feature type="transmembrane region" description="Helical" evidence="1">
    <location>
        <begin position="44"/>
        <end position="64"/>
    </location>
</feature>
<feature type="transmembrane region" description="Helical" evidence="1">
    <location>
        <begin position="71"/>
        <end position="91"/>
    </location>
</feature>
<feature type="transmembrane region" description="Helical" evidence="1">
    <location>
        <begin position="101"/>
        <end position="121"/>
    </location>
</feature>
<feature type="transmembrane region" description="Helical" evidence="1">
    <location>
        <begin position="143"/>
        <end position="163"/>
    </location>
</feature>
<feature type="transmembrane region" description="Helical" evidence="1">
    <location>
        <begin position="223"/>
        <end position="243"/>
    </location>
</feature>
<feature type="transmembrane region" description="Helical" evidence="1">
    <location>
        <begin position="252"/>
        <end position="272"/>
    </location>
</feature>
<feature type="transmembrane region" description="Helical" evidence="1">
    <location>
        <begin position="284"/>
        <end position="304"/>
    </location>
</feature>
<sequence length="317" mass="36520">MIFLTLEHILTHISFSVVSIVITIHLINLLVNEIVGLYNSSEKGMIVTLFCITGFLIIRWIYSGHFPLSNLYESLIFLSWNFSIINMLPYLKNLKNHLREITSPSTLFIQGFATSGLLTQIHEQKILVPALQSQWLMMHVSMMILSYASLLCGSLLSIALLVITFRKSRSVVGKRNKFLNRIFSNIQYINEREKILLKTSFTYSINYYRSHLLQQFDFWSYRIISIGFLFLTIGILSGAVWANEAWGSYWSWDPKETWAFITWTIFAIYLHIREKKNAEGVKSAIVASIGFLIIWICYFGINILGIGLHSYGSFPIS</sequence>
<gene>
    <name evidence="1" type="primary">ccsA</name>
</gene>
<reference key="1">
    <citation type="journal article" date="2006" name="Mol. Biol. Evol.">
        <title>The complete chloroplast genome sequence of Pelargonium x hortorum: organization and evolution of the largest and most highly rearranged chloroplast genome of land plants.</title>
        <authorList>
            <person name="Chumley T.W."/>
            <person name="Palmer J.D."/>
            <person name="Mower J.P."/>
            <person name="Fourcade H.M."/>
            <person name="Calie P.J."/>
            <person name="Boore J.L."/>
            <person name="Jansen R.K."/>
        </authorList>
    </citation>
    <scope>NUCLEOTIDE SEQUENCE [LARGE SCALE GENOMIC DNA]</scope>
    <source>
        <strain>cv. Ringo White</strain>
    </source>
</reference>
<name>CCSA_PELHO</name>
<geneLocation type="chloroplast"/>